<reference key="1">
    <citation type="journal article" date="2008" name="J. Virol.">
        <title>Group A human rotavirus genomics: evidence that gene constellations are influenced by viral protein interactions.</title>
        <authorList>
            <person name="Heiman E.M."/>
            <person name="McDonald S.M."/>
            <person name="Barro M."/>
            <person name="Taraporewala Z.F."/>
            <person name="Bar-Magen T."/>
            <person name="Patton J.T."/>
        </authorList>
    </citation>
    <scope>NUCLEOTIDE SEQUENCE [GENOMIC RNA]</scope>
</reference>
<keyword id="KW-0175">Coiled coil</keyword>
<keyword id="KW-1035">Host cytoplasm</keyword>
<keyword id="KW-0945">Host-virus interaction</keyword>
<keyword id="KW-1185">Reference proteome</keyword>
<keyword id="KW-0694">RNA-binding</keyword>
<keyword id="KW-0810">Translation regulation</keyword>
<name>NSP3_ROTAD</name>
<organismHost>
    <name type="scientific">Homo sapiens</name>
    <name type="common">Human</name>
    <dbReference type="NCBI Taxonomy" id="9606"/>
</organismHost>
<proteinExistence type="inferred from homology"/>
<evidence type="ECO:0000255" key="1">
    <source>
        <dbReference type="HAMAP-Rule" id="MF_04094"/>
    </source>
</evidence>
<sequence length="310" mass="35787">MESTQQMVSSIINTSFEAAVVAATSTLELMGIQYDYNEVFTRVKSKFDYVMDDSGVKNNLLGKAITIDQALNGKFGSAIRNRNWMTDSKTVAKLDEDVNKLRMTLSSKGIDQKMRVLNACFSVKRIPGKSSSIIKCTRLMKDKIERGEVEVDDSYVDEKMEIDTIDWKSRYDQLEKRFEALKQRVNEKYNTWVQKAKKVNENMYSLQNVISQQQNQIADLQQYCNKLEADLQGKFSSLVSSVEWYLRSMELPDDVKNDIEQQLNSIDLINPINAIDDIESLIRNLIQDYDRTFLMLKGLLKQCNYEYACE</sequence>
<comment type="function">
    <text evidence="1">Plays an important role in stimulating the translation of viral mRNAs. These mRNAs are capped but not polyadenylated, instead terminating in a conserved sequence 'GACC' at the 3' that is recognized by NSP3, which competes with host PABPC1 for EIF4G1 binding. The interaction between NSP3 and host EIF4G1 stabilizes the EIF4E-EIF4G1 interaction, thereby facilitating the initiation of capped mRNA translation.</text>
</comment>
<comment type="subunit">
    <text evidence="1">Homodimer. Interacts (via the coiled-coil region) with host ZC3H7B (via LD motif). Interacts with host EIF4G1.</text>
</comment>
<comment type="subcellular location">
    <subcellularLocation>
        <location evidence="1">Host cytoplasm</location>
    </subcellularLocation>
</comment>
<comment type="similarity">
    <text evidence="1">Belongs to the rotavirus NSP3 family.</text>
</comment>
<protein>
    <recommendedName>
        <fullName evidence="1">Non-structural protein 3</fullName>
        <shortName evidence="1">NSP3</shortName>
    </recommendedName>
    <alternativeName>
        <fullName evidence="1">NCVP4</fullName>
    </alternativeName>
    <alternativeName>
        <fullName evidence="1">Non-structural RNA-binding protein 34</fullName>
        <shortName evidence="1">NS34</shortName>
    </alternativeName>
</protein>
<organism>
    <name type="scientific">Rotavirus A (strain RVA/Human/United States/D/1974/G1P1A[8])</name>
    <name type="common">RV-A</name>
    <dbReference type="NCBI Taxonomy" id="578831"/>
    <lineage>
        <taxon>Viruses</taxon>
        <taxon>Riboviria</taxon>
        <taxon>Orthornavirae</taxon>
        <taxon>Duplornaviricota</taxon>
        <taxon>Resentoviricetes</taxon>
        <taxon>Reovirales</taxon>
        <taxon>Sedoreoviridae</taxon>
        <taxon>Rotavirus</taxon>
        <taxon>Rotavirus A</taxon>
    </lineage>
</organism>
<dbReference type="EMBL" id="EF672572">
    <property type="protein sequence ID" value="ABV53246.1"/>
    <property type="molecule type" value="Genomic_RNA"/>
</dbReference>
<dbReference type="SMR" id="B3SRS1"/>
<dbReference type="Proteomes" id="UP000006368">
    <property type="component" value="Genome"/>
</dbReference>
<dbReference type="GO" id="GO:0030430">
    <property type="term" value="C:host cell cytoplasm"/>
    <property type="evidence" value="ECO:0007669"/>
    <property type="project" value="UniProtKB-SubCell"/>
</dbReference>
<dbReference type="GO" id="GO:0003723">
    <property type="term" value="F:RNA binding"/>
    <property type="evidence" value="ECO:0007669"/>
    <property type="project" value="UniProtKB-UniRule"/>
</dbReference>
<dbReference type="GO" id="GO:0006417">
    <property type="term" value="P:regulation of translation"/>
    <property type="evidence" value="ECO:0007669"/>
    <property type="project" value="UniProtKB-UniRule"/>
</dbReference>
<dbReference type="CDD" id="cd20714">
    <property type="entry name" value="NSP3_rotavirus"/>
    <property type="match status" value="1"/>
</dbReference>
<dbReference type="Gene3D" id="3.30.70.1610">
    <property type="match status" value="1"/>
</dbReference>
<dbReference type="Gene3D" id="1.20.5.970">
    <property type="entry name" value="Nonstructural RNA-binding protein"/>
    <property type="match status" value="1"/>
</dbReference>
<dbReference type="Gene3D" id="6.10.280.20">
    <property type="entry name" value="Rotavirus non-structural protein NSP3, N-terminal domain"/>
    <property type="match status" value="1"/>
</dbReference>
<dbReference type="HAMAP" id="MF_04094">
    <property type="entry name" value="ROTA_A_NSP3"/>
    <property type="match status" value="1"/>
</dbReference>
<dbReference type="HAMAP" id="MF_04090">
    <property type="entry name" value="ROTA_NSP3"/>
    <property type="match status" value="1"/>
</dbReference>
<dbReference type="InterPro" id="IPR042519">
    <property type="entry name" value="NSP3_N_rotavirus"/>
</dbReference>
<dbReference type="InterPro" id="IPR036082">
    <property type="entry name" value="NSP3_sf"/>
</dbReference>
<dbReference type="InterPro" id="IPR002873">
    <property type="entry name" value="Rotavirus_NSP3"/>
</dbReference>
<dbReference type="Pfam" id="PF01665">
    <property type="entry name" value="Rota_NSP3"/>
    <property type="match status" value="1"/>
</dbReference>
<dbReference type="SUPFAM" id="SSF69903">
    <property type="entry name" value="NSP3 homodimer"/>
    <property type="match status" value="1"/>
</dbReference>
<dbReference type="SUPFAM" id="SSF58030">
    <property type="entry name" value="Rotavirus nonstructural proteins"/>
    <property type="match status" value="1"/>
</dbReference>
<accession>B3SRS1</accession>
<feature type="chain" id="PRO_0000369454" description="Non-structural protein 3">
    <location>
        <begin position="1"/>
        <end position="310"/>
    </location>
</feature>
<feature type="region of interest" description="RNA-binding" evidence="1">
    <location>
        <begin position="1"/>
        <end position="146"/>
    </location>
</feature>
<feature type="region of interest" description="Dimerization" evidence="1">
    <location>
        <begin position="147"/>
        <end position="203"/>
    </location>
</feature>
<feature type="region of interest" description="Interaction with host ZC3H7B" evidence="1">
    <location>
        <begin position="167"/>
        <end position="231"/>
    </location>
</feature>
<feature type="region of interest" description="Interaction with host EIF4G1" evidence="1">
    <location>
        <begin position="205"/>
        <end position="310"/>
    </location>
</feature>
<feature type="coiled-coil region" evidence="1">
    <location>
        <begin position="163"/>
        <end position="234"/>
    </location>
</feature>